<name>DCE_LACLM</name>
<accession>O30418</accession>
<accession>A2RKG2</accession>
<dbReference type="EC" id="4.1.1.15"/>
<dbReference type="EMBL" id="AF005098">
    <property type="protein sequence ID" value="AAC46188.1"/>
    <property type="molecule type" value="Genomic_DNA"/>
</dbReference>
<dbReference type="EMBL" id="AM406671">
    <property type="protein sequence ID" value="CAL97772.1"/>
    <property type="molecule type" value="Genomic_DNA"/>
</dbReference>
<dbReference type="RefSeq" id="WP_011835080.1">
    <property type="nucleotide sequence ID" value="NC_009004.1"/>
</dbReference>
<dbReference type="SMR" id="O30418"/>
<dbReference type="STRING" id="416870.llmg_1179"/>
<dbReference type="KEGG" id="llm:llmg_1179"/>
<dbReference type="eggNOG" id="COG0076">
    <property type="taxonomic scope" value="Bacteria"/>
</dbReference>
<dbReference type="HOGENOM" id="CLU_019582_2_1_9"/>
<dbReference type="OrthoDB" id="9803665at2"/>
<dbReference type="PhylomeDB" id="O30418"/>
<dbReference type="Proteomes" id="UP000000364">
    <property type="component" value="Chromosome"/>
</dbReference>
<dbReference type="GO" id="GO:0005829">
    <property type="term" value="C:cytosol"/>
    <property type="evidence" value="ECO:0007669"/>
    <property type="project" value="TreeGrafter"/>
</dbReference>
<dbReference type="GO" id="GO:0004058">
    <property type="term" value="F:aromatic-L-amino-acid decarboxylase activity"/>
    <property type="evidence" value="ECO:0007669"/>
    <property type="project" value="UniProtKB-ARBA"/>
</dbReference>
<dbReference type="GO" id="GO:0004351">
    <property type="term" value="F:glutamate decarboxylase activity"/>
    <property type="evidence" value="ECO:0007669"/>
    <property type="project" value="UniProtKB-EC"/>
</dbReference>
<dbReference type="GO" id="GO:0030170">
    <property type="term" value="F:pyridoxal phosphate binding"/>
    <property type="evidence" value="ECO:0007669"/>
    <property type="project" value="InterPro"/>
</dbReference>
<dbReference type="GO" id="GO:0006538">
    <property type="term" value="P:glutamate catabolic process"/>
    <property type="evidence" value="ECO:0007669"/>
    <property type="project" value="TreeGrafter"/>
</dbReference>
<dbReference type="CDD" id="cd06450">
    <property type="entry name" value="DOPA_deC_like"/>
    <property type="match status" value="1"/>
</dbReference>
<dbReference type="FunFam" id="3.40.640.10:FF:000017">
    <property type="entry name" value="Glutamate decarboxylase"/>
    <property type="match status" value="1"/>
</dbReference>
<dbReference type="FunFam" id="4.10.280.50:FF:000001">
    <property type="entry name" value="Glutamate decarboxylase"/>
    <property type="match status" value="1"/>
</dbReference>
<dbReference type="Gene3D" id="3.90.1150.160">
    <property type="match status" value="1"/>
</dbReference>
<dbReference type="Gene3D" id="4.10.280.50">
    <property type="match status" value="1"/>
</dbReference>
<dbReference type="Gene3D" id="3.40.640.10">
    <property type="entry name" value="Type I PLP-dependent aspartate aminotransferase-like (Major domain)"/>
    <property type="match status" value="1"/>
</dbReference>
<dbReference type="InterPro" id="IPR010107">
    <property type="entry name" value="Glutamate_decarboxylase"/>
</dbReference>
<dbReference type="InterPro" id="IPR002129">
    <property type="entry name" value="PyrdxlP-dep_de-COase"/>
</dbReference>
<dbReference type="InterPro" id="IPR015424">
    <property type="entry name" value="PyrdxlP-dep_Trfase"/>
</dbReference>
<dbReference type="InterPro" id="IPR015421">
    <property type="entry name" value="PyrdxlP-dep_Trfase_major"/>
</dbReference>
<dbReference type="NCBIfam" id="TIGR01788">
    <property type="entry name" value="Glu-decarb-GAD"/>
    <property type="match status" value="1"/>
</dbReference>
<dbReference type="PANTHER" id="PTHR43321">
    <property type="entry name" value="GLUTAMATE DECARBOXYLASE"/>
    <property type="match status" value="1"/>
</dbReference>
<dbReference type="PANTHER" id="PTHR43321:SF3">
    <property type="entry name" value="GLUTAMATE DECARBOXYLASE"/>
    <property type="match status" value="1"/>
</dbReference>
<dbReference type="Pfam" id="PF00282">
    <property type="entry name" value="Pyridoxal_deC"/>
    <property type="match status" value="1"/>
</dbReference>
<dbReference type="SUPFAM" id="SSF53383">
    <property type="entry name" value="PLP-dependent transferases"/>
    <property type="match status" value="1"/>
</dbReference>
<sequence length="466" mass="53924">MLYGKENRDEAEFLEPIFGSESEQVDLPKYKLAQQSIEPRVAYQLVQDEMLDEGNARLNLATFCQTYMEPEAVKLMSQTLEKNAIDKSEYPRTTEIENRCVNMIADLWNASEKEKFMGTSTIGSSEACMLGGMAMKFSWRKRAEKLGLDINAKKPNLVISSGYQVCWEKFCVYWDIEMREVPMDREHMSINLEKVMDYVDEYTIGVVGIMGITYTGRYDDIKALDNLIEEYNKQTDYKVYIHVDAASGGLYAPFVEPELEWDFRLKNVISINTSGHKYGLVYPGVGWVLWRDKKYLPEELIFKVSYLGGELPTMAINFSHSASQLIGQYYNFVRYGFDGYKAIHERTHKVAMYLAEEIEKTGMFEIMNDGAQLPIVCYKLKENSNRGWNLYDLADRLLMKGWQVPAYPLPKNLENEIIQRLVIRADFGMNMAFNYVQDMQEAIDALNKAHILFHQEPENKTYGFTH</sequence>
<protein>
    <recommendedName>
        <fullName>Glutamate decarboxylase</fullName>
        <ecNumber>4.1.1.15</ecNumber>
    </recommendedName>
</protein>
<proteinExistence type="evidence at protein level"/>
<organism>
    <name type="scientific">Lactococcus lactis subsp. cremoris (strain MG1363)</name>
    <dbReference type="NCBI Taxonomy" id="416870"/>
    <lineage>
        <taxon>Bacteria</taxon>
        <taxon>Bacillati</taxon>
        <taxon>Bacillota</taxon>
        <taxon>Bacilli</taxon>
        <taxon>Lactobacillales</taxon>
        <taxon>Streptococcaceae</taxon>
        <taxon>Lactococcus</taxon>
        <taxon>Lactococcus cremoris subsp. cremoris</taxon>
    </lineage>
</organism>
<evidence type="ECO:0000250" key="1"/>
<evidence type="ECO:0000305" key="2"/>
<keyword id="KW-0210">Decarboxylase</keyword>
<keyword id="KW-0456">Lyase</keyword>
<keyword id="KW-0663">Pyridoxal phosphate</keyword>
<comment type="function">
    <text>Converts internalized glutamate to GABA and increases the internal pH. Involved in glutamate-dependent acid resistance.</text>
</comment>
<comment type="catalytic activity">
    <reaction>
        <text>L-glutamate + H(+) = 4-aminobutanoate + CO2</text>
        <dbReference type="Rhea" id="RHEA:17785"/>
        <dbReference type="ChEBI" id="CHEBI:15378"/>
        <dbReference type="ChEBI" id="CHEBI:16526"/>
        <dbReference type="ChEBI" id="CHEBI:29985"/>
        <dbReference type="ChEBI" id="CHEBI:59888"/>
        <dbReference type="EC" id="4.1.1.15"/>
    </reaction>
</comment>
<comment type="cofactor">
    <cofactor evidence="1">
        <name>pyridoxal 5'-phosphate</name>
        <dbReference type="ChEBI" id="CHEBI:597326"/>
    </cofactor>
</comment>
<comment type="induction">
    <text>Expression is highest at onset of stationary phase in presence of NaCl and glutamate, and at low pH. Chloride-dependent expression is activated by GadR.</text>
</comment>
<comment type="similarity">
    <text evidence="2">Belongs to the group II decarboxylase family.</text>
</comment>
<gene>
    <name type="primary">gadB</name>
    <name type="ordered locus">llmg_1179</name>
</gene>
<feature type="chain" id="PRO_0000146987" description="Glutamate decarboxylase">
    <location>
        <begin position="1"/>
        <end position="466"/>
    </location>
</feature>
<feature type="modified residue" description="N6-(pyridoxal phosphate)lysine" evidence="1">
    <location>
        <position position="277"/>
    </location>
</feature>
<feature type="sequence conflict" description="In Ref. 1; AAC46188." evidence="2" ref="1">
    <original>E</original>
    <variation>G</variation>
    <location>
        <position position="114"/>
    </location>
</feature>
<feature type="sequence conflict" description="In Ref. 1; AAC46188." evidence="2" ref="1">
    <original>FM</original>
    <variation>IY</variation>
    <location>
        <begin position="116"/>
        <end position="117"/>
    </location>
</feature>
<reference key="1">
    <citation type="journal article" date="1998" name="Mol. Microbiol.">
        <title>A chloride-inducible acid resistance mechanism in Lactococcus lactis and its regulation.</title>
        <authorList>
            <person name="Sanders J.W."/>
            <person name="Leenhouts K."/>
            <person name="Burghoorn J."/>
            <person name="Brands J.R."/>
            <person name="Venema G."/>
            <person name="Kok J."/>
        </authorList>
    </citation>
    <scope>NUCLEOTIDE SEQUENCE [GENOMIC DNA]</scope>
    <scope>CHARACTERIZATION</scope>
</reference>
<reference key="2">
    <citation type="journal article" date="2007" name="J. Bacteriol.">
        <title>The complete genome sequence of the lactic acid bacterial paradigm Lactococcus lactis subsp. cremoris MG1363.</title>
        <authorList>
            <person name="Wegmann U."/>
            <person name="O'Connell-Motherway M."/>
            <person name="Zomer A."/>
            <person name="Buist G."/>
            <person name="Shearman C."/>
            <person name="Canchaya C."/>
            <person name="Ventura M."/>
            <person name="Goesmann A."/>
            <person name="Gasson M.J."/>
            <person name="Kuipers O.P."/>
            <person name="van Sinderen D."/>
            <person name="Kok J."/>
        </authorList>
    </citation>
    <scope>NUCLEOTIDE SEQUENCE [LARGE SCALE GENOMIC DNA]</scope>
    <source>
        <strain>MG1363</strain>
    </source>
</reference>